<protein>
    <recommendedName>
        <fullName evidence="6">Protein S100-Z</fullName>
    </recommendedName>
    <alternativeName>
        <fullName evidence="7">S100 calcium-binding protein Z</fullName>
    </alternativeName>
</protein>
<feature type="initiator methionine" description="Removed" evidence="3">
    <location>
        <position position="1"/>
    </location>
</feature>
<feature type="chain" id="PRO_0000144033" description="Protein S100-Z">
    <location>
        <begin position="2"/>
        <end position="99"/>
    </location>
</feature>
<feature type="domain" description="EF-hand 1" evidence="6">
    <location>
        <begin position="13"/>
        <end position="48"/>
    </location>
</feature>
<feature type="domain" description="EF-hand 2" evidence="2">
    <location>
        <begin position="50"/>
        <end position="85"/>
    </location>
</feature>
<feature type="binding site" evidence="1">
    <location>
        <position position="20"/>
    </location>
    <ligand>
        <name>Ca(2+)</name>
        <dbReference type="ChEBI" id="CHEBI:29108"/>
        <label>1</label>
        <note>low affinity</note>
    </ligand>
</feature>
<feature type="binding site" evidence="1">
    <location>
        <position position="23"/>
    </location>
    <ligand>
        <name>Ca(2+)</name>
        <dbReference type="ChEBI" id="CHEBI:29108"/>
        <label>1</label>
        <note>low affinity</note>
    </ligand>
</feature>
<feature type="binding site" evidence="6">
    <location>
        <position position="28"/>
    </location>
    <ligand>
        <name>Ca(2+)</name>
        <dbReference type="ChEBI" id="CHEBI:29108"/>
        <label>1</label>
        <note>low affinity</note>
    </ligand>
</feature>
<feature type="binding site" evidence="6">
    <location>
        <position position="33"/>
    </location>
    <ligand>
        <name>Ca(2+)</name>
        <dbReference type="ChEBI" id="CHEBI:29108"/>
        <label>1</label>
        <note>low affinity</note>
    </ligand>
</feature>
<feature type="binding site" evidence="2">
    <location>
        <position position="63"/>
    </location>
    <ligand>
        <name>Ca(2+)</name>
        <dbReference type="ChEBI" id="CHEBI:29108"/>
        <label>2</label>
        <note>high affinity</note>
    </ligand>
</feature>
<feature type="binding site" evidence="2">
    <location>
        <position position="65"/>
    </location>
    <ligand>
        <name>Ca(2+)</name>
        <dbReference type="ChEBI" id="CHEBI:29108"/>
        <label>2</label>
        <note>high affinity</note>
    </ligand>
</feature>
<feature type="binding site" evidence="2">
    <location>
        <position position="67"/>
    </location>
    <ligand>
        <name>Ca(2+)</name>
        <dbReference type="ChEBI" id="CHEBI:29108"/>
        <label>2</label>
        <note>high affinity</note>
    </ligand>
</feature>
<feature type="binding site" evidence="2">
    <location>
        <position position="69"/>
    </location>
    <ligand>
        <name>Ca(2+)</name>
        <dbReference type="ChEBI" id="CHEBI:29108"/>
        <label>2</label>
        <note>high affinity</note>
    </ligand>
</feature>
<feature type="binding site" evidence="2">
    <location>
        <position position="74"/>
    </location>
    <ligand>
        <name>Ca(2+)</name>
        <dbReference type="ChEBI" id="CHEBI:29108"/>
        <label>2</label>
        <note>high affinity</note>
    </ligand>
</feature>
<feature type="sequence variant" id="VAR_060484" description="In dbSNP:rs1320308." evidence="3 4">
    <original>E</original>
    <variation>A</variation>
    <location>
        <position position="23"/>
    </location>
</feature>
<feature type="helix" evidence="9">
    <location>
        <begin position="4"/>
        <end position="18"/>
    </location>
</feature>
<feature type="strand" evidence="9">
    <location>
        <begin position="28"/>
        <end position="30"/>
    </location>
</feature>
<feature type="helix" evidence="9">
    <location>
        <begin position="31"/>
        <end position="41"/>
    </location>
</feature>
<feature type="helix" evidence="9">
    <location>
        <begin position="45"/>
        <end position="51"/>
    </location>
</feature>
<feature type="helix" evidence="9">
    <location>
        <begin position="53"/>
        <end position="64"/>
    </location>
</feature>
<feature type="turn" evidence="9">
    <location>
        <begin position="65"/>
        <end position="67"/>
    </location>
</feature>
<feature type="strand" evidence="9">
    <location>
        <begin position="68"/>
        <end position="71"/>
    </location>
</feature>
<feature type="helix" evidence="9">
    <location>
        <begin position="72"/>
        <end position="96"/>
    </location>
</feature>
<gene>
    <name evidence="7" type="primary">S100Z</name>
</gene>
<keyword id="KW-0002">3D-structure</keyword>
<keyword id="KW-0106">Calcium</keyword>
<keyword id="KW-0903">Direct protein sequencing</keyword>
<keyword id="KW-0479">Metal-binding</keyword>
<keyword id="KW-1185">Reference proteome</keyword>
<keyword id="KW-0677">Repeat</keyword>
<sequence length="99" mass="11620">MPTQLEMAMDTMIRIFHRYSGKERKRFKLSKGELKLLLQRELTEFLSCQKETQLVDKIVQDLDANKDNEVDFNEFVVMVAALTVACNDYFVEQLKKKGK</sequence>
<name>S100Z_HUMAN</name>
<comment type="subunit">
    <text evidence="3 5">Homodimer (PubMed:28074300). Interacts with S100P (PubMed:11747429).</text>
</comment>
<comment type="interaction">
    <interactant intactId="EBI-12198403">
        <id>Q8WXG8</id>
    </interactant>
    <interactant intactId="EBI-741753">
        <id>Q00994</id>
        <label>BEX3</label>
    </interactant>
    <organismsDiffer>false</organismsDiffer>
    <experiments>5</experiments>
</comment>
<comment type="interaction">
    <interactant intactId="EBI-12198403">
        <id>Q8WXG8</id>
    </interactant>
    <interactant intactId="EBI-536879">
        <id>O43482</id>
        <label>OIP5</label>
    </interactant>
    <organismsDiffer>false</organismsDiffer>
    <experiments>3</experiments>
</comment>
<comment type="interaction">
    <interactant intactId="EBI-12198403">
        <id>Q8WXG8</id>
    </interactant>
    <interactant intactId="EBI-960081">
        <id>P50749</id>
        <label>RASSF2</label>
    </interactant>
    <organismsDiffer>false</organismsDiffer>
    <experiments>3</experiments>
</comment>
<comment type="interaction">
    <interactant intactId="EBI-12198403">
        <id>Q8WXG8</id>
    </interactant>
    <interactant intactId="EBI-473821">
        <id>Q5RL73</id>
        <label>RBM48</label>
    </interactant>
    <organismsDiffer>false</organismsDiffer>
    <experiments>3</experiments>
</comment>
<comment type="interaction">
    <interactant intactId="EBI-12198403">
        <id>Q8WXG8</id>
    </interactant>
    <interactant intactId="EBI-743686">
        <id>P23297</id>
        <label>S100A1</label>
    </interactant>
    <organismsDiffer>false</organismsDiffer>
    <experiments>7</experiments>
</comment>
<comment type="interaction">
    <interactant intactId="EBI-12198403">
        <id>Q8WXG8</id>
    </interactant>
    <interactant intactId="EBI-717048">
        <id>P60903</id>
        <label>S100A10</label>
    </interactant>
    <organismsDiffer>false</organismsDiffer>
    <experiments>6</experiments>
</comment>
<comment type="interaction">
    <interactant intactId="EBI-12198403">
        <id>Q8WXG8</id>
    </interactant>
    <interactant intactId="EBI-1044747">
        <id>P33764</id>
        <label>S100A3</label>
    </interactant>
    <organismsDiffer>false</organismsDiffer>
    <experiments>3</experiments>
</comment>
<comment type="interaction">
    <interactant intactId="EBI-12198403">
        <id>Q8WXG8</id>
    </interactant>
    <interactant intactId="EBI-458391">
        <id>P04271</id>
        <label>S100B</label>
    </interactant>
    <organismsDiffer>false</organismsDiffer>
    <experiments>3</experiments>
</comment>
<comment type="interaction">
    <interactant intactId="EBI-12198403">
        <id>Q8WXG8</id>
    </interactant>
    <interactant intactId="EBI-743700">
        <id>P25815</id>
        <label>S100P</label>
    </interactant>
    <organismsDiffer>false</organismsDiffer>
    <experiments>3</experiments>
</comment>
<comment type="interaction">
    <interactant intactId="EBI-12198403">
        <id>Q8WXG8</id>
    </interactant>
    <interactant intactId="EBI-12004298">
        <id>O75971-2</id>
        <label>SNAPC5</label>
    </interactant>
    <organismsDiffer>false</organismsDiffer>
    <experiments>3</experiments>
</comment>
<comment type="tissue specificity">
    <text evidence="3">Highest level of expression in spleen and leukocytes.</text>
</comment>
<comment type="similarity">
    <text evidence="6">Belongs to the S-100 family.</text>
</comment>
<dbReference type="EMBL" id="AF437876">
    <property type="protein sequence ID" value="AAL30893.1"/>
    <property type="molecule type" value="mRNA"/>
</dbReference>
<dbReference type="EMBL" id="AC114962">
    <property type="status" value="NOT_ANNOTATED_CDS"/>
    <property type="molecule type" value="Genomic_DNA"/>
</dbReference>
<dbReference type="EMBL" id="BC022320">
    <property type="protein sequence ID" value="AAH22320.1"/>
    <property type="molecule type" value="mRNA"/>
</dbReference>
<dbReference type="CCDS" id="CCDS43333.1"/>
<dbReference type="RefSeq" id="NP_570128.2">
    <property type="nucleotide sequence ID" value="NM_130772.4"/>
</dbReference>
<dbReference type="RefSeq" id="XP_011541541.1">
    <property type="nucleotide sequence ID" value="XM_011543239.2"/>
</dbReference>
<dbReference type="RefSeq" id="XP_011541542.1">
    <property type="nucleotide sequence ID" value="XM_011543240.4"/>
</dbReference>
<dbReference type="RefSeq" id="XP_011541543.1">
    <property type="nucleotide sequence ID" value="XM_011543241.3"/>
</dbReference>
<dbReference type="RefSeq" id="XP_011541546.1">
    <property type="nucleotide sequence ID" value="XM_011543244.3"/>
</dbReference>
<dbReference type="RefSeq" id="XP_011541547.1">
    <property type="nucleotide sequence ID" value="XM_011543245.3"/>
</dbReference>
<dbReference type="RefSeq" id="XP_016864660.1">
    <property type="nucleotide sequence ID" value="XM_017009171.2"/>
</dbReference>
<dbReference type="RefSeq" id="XP_016864661.1">
    <property type="nucleotide sequence ID" value="XM_017009172.1"/>
</dbReference>
<dbReference type="RefSeq" id="XP_016864662.1">
    <property type="nucleotide sequence ID" value="XM_017009173.1"/>
</dbReference>
<dbReference type="RefSeq" id="XP_047272825.1">
    <property type="nucleotide sequence ID" value="XM_047416869.1"/>
</dbReference>
<dbReference type="RefSeq" id="XP_047272827.1">
    <property type="nucleotide sequence ID" value="XM_047416871.1"/>
</dbReference>
<dbReference type="RefSeq" id="XP_047272828.1">
    <property type="nucleotide sequence ID" value="XM_047416872.1"/>
</dbReference>
<dbReference type="RefSeq" id="XP_047272829.1">
    <property type="nucleotide sequence ID" value="XM_047416873.1"/>
</dbReference>
<dbReference type="RefSeq" id="XP_054207893.1">
    <property type="nucleotide sequence ID" value="XM_054351918.1"/>
</dbReference>
<dbReference type="RefSeq" id="XP_054207894.1">
    <property type="nucleotide sequence ID" value="XM_054351919.1"/>
</dbReference>
<dbReference type="RefSeq" id="XP_054207895.1">
    <property type="nucleotide sequence ID" value="XM_054351920.1"/>
</dbReference>
<dbReference type="RefSeq" id="XP_054207896.1">
    <property type="nucleotide sequence ID" value="XM_054351921.1"/>
</dbReference>
<dbReference type="RefSeq" id="XP_054207897.1">
    <property type="nucleotide sequence ID" value="XM_054351922.1"/>
</dbReference>
<dbReference type="RefSeq" id="XP_054207898.1">
    <property type="nucleotide sequence ID" value="XM_054351923.1"/>
</dbReference>
<dbReference type="PDB" id="5HYD">
    <property type="method" value="X-ray"/>
    <property type="resolution" value="2.30 A"/>
    <property type="chains" value="A/B/C/D=2-97"/>
</dbReference>
<dbReference type="PDBsum" id="5HYD"/>
<dbReference type="SMR" id="Q8WXG8"/>
<dbReference type="BioGRID" id="128065">
    <property type="interactions" value="10"/>
</dbReference>
<dbReference type="FunCoup" id="Q8WXG8">
    <property type="interactions" value="46"/>
</dbReference>
<dbReference type="IntAct" id="Q8WXG8">
    <property type="interactions" value="11"/>
</dbReference>
<dbReference type="STRING" id="9606.ENSP00000320430"/>
<dbReference type="BioMuta" id="S100Z"/>
<dbReference type="DMDM" id="296453019"/>
<dbReference type="PaxDb" id="9606-ENSP00000320430"/>
<dbReference type="Antibodypedia" id="54566">
    <property type="antibodies" value="124 antibodies from 22 providers"/>
</dbReference>
<dbReference type="DNASU" id="170591"/>
<dbReference type="Ensembl" id="ENST00000317593.9">
    <property type="protein sequence ID" value="ENSP00000320430.4"/>
    <property type="gene ID" value="ENSG00000171643.14"/>
</dbReference>
<dbReference type="Ensembl" id="ENST00000513010.5">
    <property type="protein sequence ID" value="ENSP00000426768.1"/>
    <property type="gene ID" value="ENSG00000171643.14"/>
</dbReference>
<dbReference type="Ensembl" id="ENST00000613039.1">
    <property type="protein sequence ID" value="ENSP00000483535.1"/>
    <property type="gene ID" value="ENSG00000171643.14"/>
</dbReference>
<dbReference type="GeneID" id="170591"/>
<dbReference type="KEGG" id="hsa:170591"/>
<dbReference type="MANE-Select" id="ENST00000317593.9">
    <property type="protein sequence ID" value="ENSP00000320430.4"/>
    <property type="RefSeq nucleotide sequence ID" value="NM_130772.4"/>
    <property type="RefSeq protein sequence ID" value="NP_570128.2"/>
</dbReference>
<dbReference type="UCSC" id="uc003kep.1">
    <property type="organism name" value="human"/>
</dbReference>
<dbReference type="AGR" id="HGNC:30367"/>
<dbReference type="CTD" id="170591"/>
<dbReference type="DisGeNET" id="170591"/>
<dbReference type="GeneCards" id="S100Z"/>
<dbReference type="HGNC" id="HGNC:30367">
    <property type="gene designation" value="S100Z"/>
</dbReference>
<dbReference type="HPA" id="ENSG00000171643">
    <property type="expression patterns" value="Tissue enhanced (bone marrow, lymphoid tissue)"/>
</dbReference>
<dbReference type="MIM" id="610103">
    <property type="type" value="gene"/>
</dbReference>
<dbReference type="neXtProt" id="NX_Q8WXG8"/>
<dbReference type="OpenTargets" id="ENSG00000171643"/>
<dbReference type="PharmGKB" id="PA134902118"/>
<dbReference type="VEuPathDB" id="HostDB:ENSG00000171643"/>
<dbReference type="eggNOG" id="ENOG502S17E">
    <property type="taxonomic scope" value="Eukaryota"/>
</dbReference>
<dbReference type="GeneTree" id="ENSGT00940000161125"/>
<dbReference type="HOGENOM" id="CLU_138624_2_1_1"/>
<dbReference type="InParanoid" id="Q8WXG8"/>
<dbReference type="OMA" id="QYSCKEG"/>
<dbReference type="OrthoDB" id="26525at2759"/>
<dbReference type="PAN-GO" id="Q8WXG8">
    <property type="GO annotations" value="2 GO annotations based on evolutionary models"/>
</dbReference>
<dbReference type="PhylomeDB" id="Q8WXG8"/>
<dbReference type="TreeFam" id="TF332727"/>
<dbReference type="PathwayCommons" id="Q8WXG8"/>
<dbReference type="SignaLink" id="Q8WXG8"/>
<dbReference type="BioGRID-ORCS" id="170591">
    <property type="hits" value="13 hits in 1148 CRISPR screens"/>
</dbReference>
<dbReference type="ChiTaRS" id="S100Z">
    <property type="organism name" value="human"/>
</dbReference>
<dbReference type="GenomeRNAi" id="170591"/>
<dbReference type="Pharos" id="Q8WXG8">
    <property type="development level" value="Tbio"/>
</dbReference>
<dbReference type="PRO" id="PR:Q8WXG8"/>
<dbReference type="Proteomes" id="UP000005640">
    <property type="component" value="Chromosome 5"/>
</dbReference>
<dbReference type="RNAct" id="Q8WXG8">
    <property type="molecule type" value="protein"/>
</dbReference>
<dbReference type="Bgee" id="ENSG00000171643">
    <property type="expression patterns" value="Expressed in monocyte and 87 other cell types or tissues"/>
</dbReference>
<dbReference type="GO" id="GO:0005509">
    <property type="term" value="F:calcium ion binding"/>
    <property type="evidence" value="ECO:0000314"/>
    <property type="project" value="UniProtKB"/>
</dbReference>
<dbReference type="GO" id="GO:0048306">
    <property type="term" value="F:calcium-dependent protein binding"/>
    <property type="evidence" value="ECO:0000318"/>
    <property type="project" value="GO_Central"/>
</dbReference>
<dbReference type="GO" id="GO:0042803">
    <property type="term" value="F:protein homodimerization activity"/>
    <property type="evidence" value="ECO:0000314"/>
    <property type="project" value="UniProtKB"/>
</dbReference>
<dbReference type="FunFam" id="1.10.238.10:FF:000044">
    <property type="entry name" value="Protein S100"/>
    <property type="match status" value="1"/>
</dbReference>
<dbReference type="Gene3D" id="1.10.238.10">
    <property type="entry name" value="EF-hand"/>
    <property type="match status" value="1"/>
</dbReference>
<dbReference type="InterPro" id="IPR011992">
    <property type="entry name" value="EF-hand-dom_pair"/>
</dbReference>
<dbReference type="InterPro" id="IPR018247">
    <property type="entry name" value="EF_Hand_1_Ca_BS"/>
</dbReference>
<dbReference type="InterPro" id="IPR002048">
    <property type="entry name" value="EF_hand_dom"/>
</dbReference>
<dbReference type="InterPro" id="IPR001751">
    <property type="entry name" value="S100/CaBP7/8-like_CS"/>
</dbReference>
<dbReference type="InterPro" id="IPR013787">
    <property type="entry name" value="S100_Ca-bd_sub"/>
</dbReference>
<dbReference type="PANTHER" id="PTHR11639:SF72">
    <property type="entry name" value="PROTEIN S100-Z"/>
    <property type="match status" value="1"/>
</dbReference>
<dbReference type="PANTHER" id="PTHR11639">
    <property type="entry name" value="S100 CALCIUM-BINDING PROTEIN"/>
    <property type="match status" value="1"/>
</dbReference>
<dbReference type="Pfam" id="PF01023">
    <property type="entry name" value="S_100"/>
    <property type="match status" value="1"/>
</dbReference>
<dbReference type="SMART" id="SM00054">
    <property type="entry name" value="EFh"/>
    <property type="match status" value="1"/>
</dbReference>
<dbReference type="SMART" id="SM01394">
    <property type="entry name" value="S_100"/>
    <property type="match status" value="1"/>
</dbReference>
<dbReference type="SUPFAM" id="SSF47473">
    <property type="entry name" value="EF-hand"/>
    <property type="match status" value="1"/>
</dbReference>
<dbReference type="PROSITE" id="PS00018">
    <property type="entry name" value="EF_HAND_1"/>
    <property type="match status" value="1"/>
</dbReference>
<dbReference type="PROSITE" id="PS50222">
    <property type="entry name" value="EF_HAND_2"/>
    <property type="match status" value="1"/>
</dbReference>
<dbReference type="PROSITE" id="PS00303">
    <property type="entry name" value="S100_CABP"/>
    <property type="match status" value="1"/>
</dbReference>
<organism>
    <name type="scientific">Homo sapiens</name>
    <name type="common">Human</name>
    <dbReference type="NCBI Taxonomy" id="9606"/>
    <lineage>
        <taxon>Eukaryota</taxon>
        <taxon>Metazoa</taxon>
        <taxon>Chordata</taxon>
        <taxon>Craniata</taxon>
        <taxon>Vertebrata</taxon>
        <taxon>Euteleostomi</taxon>
        <taxon>Mammalia</taxon>
        <taxon>Eutheria</taxon>
        <taxon>Euarchontoglires</taxon>
        <taxon>Primates</taxon>
        <taxon>Haplorrhini</taxon>
        <taxon>Catarrhini</taxon>
        <taxon>Hominidae</taxon>
        <taxon>Homo</taxon>
    </lineage>
</organism>
<reference key="1">
    <citation type="journal article" date="2001" name="Biochemistry">
        <title>Molecular characterization and tissue distribution of a novel member of the S100 family of EF-hand proteins.</title>
        <authorList>
            <person name="Gribenko A.V."/>
            <person name="Hopper J.E."/>
            <person name="Makhatadze G.I."/>
        </authorList>
    </citation>
    <scope>NUCLEOTIDE SEQUENCE [MRNA]</scope>
    <scope>PROTEIN SEQUENCE OF 2-21</scope>
    <scope>SUBUNIT</scope>
    <scope>CALCIUM-BINDING</scope>
    <scope>TISSUE SPECIFICITY</scope>
    <scope>INTERACTION WITH S100P</scope>
    <scope>VARIANT ALA-23</scope>
    <source>
        <tissue>Prostate</tissue>
    </source>
</reference>
<reference key="2">
    <citation type="journal article" date="2004" name="Nature">
        <title>The DNA sequence and comparative analysis of human chromosome 5.</title>
        <authorList>
            <person name="Schmutz J."/>
            <person name="Martin J."/>
            <person name="Terry A."/>
            <person name="Couronne O."/>
            <person name="Grimwood J."/>
            <person name="Lowry S."/>
            <person name="Gordon L.A."/>
            <person name="Scott D."/>
            <person name="Xie G."/>
            <person name="Huang W."/>
            <person name="Hellsten U."/>
            <person name="Tran-Gyamfi M."/>
            <person name="She X."/>
            <person name="Prabhakar S."/>
            <person name="Aerts A."/>
            <person name="Altherr M."/>
            <person name="Bajorek E."/>
            <person name="Black S."/>
            <person name="Branscomb E."/>
            <person name="Caoile C."/>
            <person name="Challacombe J.F."/>
            <person name="Chan Y.M."/>
            <person name="Denys M."/>
            <person name="Detter J.C."/>
            <person name="Escobar J."/>
            <person name="Flowers D."/>
            <person name="Fotopulos D."/>
            <person name="Glavina T."/>
            <person name="Gomez M."/>
            <person name="Gonzales E."/>
            <person name="Goodstein D."/>
            <person name="Grigoriev I."/>
            <person name="Groza M."/>
            <person name="Hammon N."/>
            <person name="Hawkins T."/>
            <person name="Haydu L."/>
            <person name="Israni S."/>
            <person name="Jett J."/>
            <person name="Kadner K."/>
            <person name="Kimball H."/>
            <person name="Kobayashi A."/>
            <person name="Lopez F."/>
            <person name="Lou Y."/>
            <person name="Martinez D."/>
            <person name="Medina C."/>
            <person name="Morgan J."/>
            <person name="Nandkeshwar R."/>
            <person name="Noonan J.P."/>
            <person name="Pitluck S."/>
            <person name="Pollard M."/>
            <person name="Predki P."/>
            <person name="Priest J."/>
            <person name="Ramirez L."/>
            <person name="Retterer J."/>
            <person name="Rodriguez A."/>
            <person name="Rogers S."/>
            <person name="Salamov A."/>
            <person name="Salazar A."/>
            <person name="Thayer N."/>
            <person name="Tice H."/>
            <person name="Tsai M."/>
            <person name="Ustaszewska A."/>
            <person name="Vo N."/>
            <person name="Wheeler J."/>
            <person name="Wu K."/>
            <person name="Yang J."/>
            <person name="Dickson M."/>
            <person name="Cheng J.-F."/>
            <person name="Eichler E.E."/>
            <person name="Olsen A."/>
            <person name="Pennacchio L.A."/>
            <person name="Rokhsar D.S."/>
            <person name="Richardson P."/>
            <person name="Lucas S.M."/>
            <person name="Myers R.M."/>
            <person name="Rubin E.M."/>
        </authorList>
    </citation>
    <scope>NUCLEOTIDE SEQUENCE [LARGE SCALE GENOMIC DNA]</scope>
</reference>
<reference key="3">
    <citation type="journal article" date="2004" name="Genome Res.">
        <title>The status, quality, and expansion of the NIH full-length cDNA project: the Mammalian Gene Collection (MGC).</title>
        <authorList>
            <consortium name="The MGC Project Team"/>
        </authorList>
    </citation>
    <scope>NUCLEOTIDE SEQUENCE [LARGE SCALE MRNA]</scope>
    <scope>VARIANT ALA-23</scope>
    <source>
        <tissue>Testis</tissue>
    </source>
</reference>
<reference evidence="8" key="4">
    <citation type="journal article" date="2017" name="J. Biol. Inorg. Chem.">
        <title>Solving the crystal structure of human calcium-free S100Z: the siege and conquer of one of the last S100 family strongholds.</title>
        <authorList>
            <person name="Calderone V."/>
            <person name="Fragai M."/>
            <person name="Gallo G."/>
            <person name="Luchinat C."/>
        </authorList>
    </citation>
    <scope>X-RAY CRYSTALLOGRAPHY (2.30 ANGSTROMS)</scope>
    <scope>SUBUNIT</scope>
</reference>
<proteinExistence type="evidence at protein level"/>
<accession>Q8WXG8</accession>
<evidence type="ECO:0000250" key="1">
    <source>
        <dbReference type="UniProtKB" id="Q503K9"/>
    </source>
</evidence>
<evidence type="ECO:0000255" key="2">
    <source>
        <dbReference type="PROSITE-ProRule" id="PRU00448"/>
    </source>
</evidence>
<evidence type="ECO:0000269" key="3">
    <source>
    </source>
</evidence>
<evidence type="ECO:0000269" key="4">
    <source>
    </source>
</evidence>
<evidence type="ECO:0000269" key="5">
    <source>
    </source>
</evidence>
<evidence type="ECO:0000305" key="6"/>
<evidence type="ECO:0000312" key="7">
    <source>
        <dbReference type="HGNC" id="HGNC:30367"/>
    </source>
</evidence>
<evidence type="ECO:0007744" key="8">
    <source>
        <dbReference type="PDB" id="5HYD"/>
    </source>
</evidence>
<evidence type="ECO:0007829" key="9">
    <source>
        <dbReference type="PDB" id="5HYD"/>
    </source>
</evidence>